<reference key="1">
    <citation type="journal article" date="2000" name="Nature">
        <title>The genome sequence of the plant pathogen Xylella fastidiosa.</title>
        <authorList>
            <person name="Simpson A.J.G."/>
            <person name="Reinach F.C."/>
            <person name="Arruda P."/>
            <person name="Abreu F.A."/>
            <person name="Acencio M."/>
            <person name="Alvarenga R."/>
            <person name="Alves L.M.C."/>
            <person name="Araya J.E."/>
            <person name="Baia G.S."/>
            <person name="Baptista C.S."/>
            <person name="Barros M.H."/>
            <person name="Bonaccorsi E.D."/>
            <person name="Bordin S."/>
            <person name="Bove J.M."/>
            <person name="Briones M.R.S."/>
            <person name="Bueno M.R.P."/>
            <person name="Camargo A.A."/>
            <person name="Camargo L.E.A."/>
            <person name="Carraro D.M."/>
            <person name="Carrer H."/>
            <person name="Colauto N.B."/>
            <person name="Colombo C."/>
            <person name="Costa F.F."/>
            <person name="Costa M.C.R."/>
            <person name="Costa-Neto C.M."/>
            <person name="Coutinho L.L."/>
            <person name="Cristofani M."/>
            <person name="Dias-Neto E."/>
            <person name="Docena C."/>
            <person name="El-Dorry H."/>
            <person name="Facincani A.P."/>
            <person name="Ferreira A.J.S."/>
            <person name="Ferreira V.C.A."/>
            <person name="Ferro J.A."/>
            <person name="Fraga J.S."/>
            <person name="Franca S.C."/>
            <person name="Franco M.C."/>
            <person name="Frohme M."/>
            <person name="Furlan L.R."/>
            <person name="Garnier M."/>
            <person name="Goldman G.H."/>
            <person name="Goldman M.H.S."/>
            <person name="Gomes S.L."/>
            <person name="Gruber A."/>
            <person name="Ho P.L."/>
            <person name="Hoheisel J.D."/>
            <person name="Junqueira M.L."/>
            <person name="Kemper E.L."/>
            <person name="Kitajima J.P."/>
            <person name="Krieger J.E."/>
            <person name="Kuramae E.E."/>
            <person name="Laigret F."/>
            <person name="Lambais M.R."/>
            <person name="Leite L.C.C."/>
            <person name="Lemos E.G.M."/>
            <person name="Lemos M.V.F."/>
            <person name="Lopes S.A."/>
            <person name="Lopes C.R."/>
            <person name="Machado J.A."/>
            <person name="Machado M.A."/>
            <person name="Madeira A.M.B.N."/>
            <person name="Madeira H.M.F."/>
            <person name="Marino C.L."/>
            <person name="Marques M.V."/>
            <person name="Martins E.A.L."/>
            <person name="Martins E.M.F."/>
            <person name="Matsukuma A.Y."/>
            <person name="Menck C.F.M."/>
            <person name="Miracca E.C."/>
            <person name="Miyaki C.Y."/>
            <person name="Monteiro-Vitorello C.B."/>
            <person name="Moon D.H."/>
            <person name="Nagai M.A."/>
            <person name="Nascimento A.L.T.O."/>
            <person name="Netto L.E.S."/>
            <person name="Nhani A. Jr."/>
            <person name="Nobrega F.G."/>
            <person name="Nunes L.R."/>
            <person name="Oliveira M.A."/>
            <person name="de Oliveira M.C."/>
            <person name="de Oliveira R.C."/>
            <person name="Palmieri D.A."/>
            <person name="Paris A."/>
            <person name="Peixoto B.R."/>
            <person name="Pereira G.A.G."/>
            <person name="Pereira H.A. Jr."/>
            <person name="Pesquero J.B."/>
            <person name="Quaggio R.B."/>
            <person name="Roberto P.G."/>
            <person name="Rodrigues V."/>
            <person name="de Rosa A.J.M."/>
            <person name="de Rosa V.E. Jr."/>
            <person name="de Sa R.G."/>
            <person name="Santelli R.V."/>
            <person name="Sawasaki H.E."/>
            <person name="da Silva A.C.R."/>
            <person name="da Silva A.M."/>
            <person name="da Silva F.R."/>
            <person name="Silva W.A. Jr."/>
            <person name="da Silveira J.F."/>
            <person name="Silvestri M.L.Z."/>
            <person name="Siqueira W.J."/>
            <person name="de Souza A.A."/>
            <person name="de Souza A.P."/>
            <person name="Terenzi M.F."/>
            <person name="Truffi D."/>
            <person name="Tsai S.M."/>
            <person name="Tsuhako M.H."/>
            <person name="Vallada H."/>
            <person name="Van Sluys M.A."/>
            <person name="Verjovski-Almeida S."/>
            <person name="Vettore A.L."/>
            <person name="Zago M.A."/>
            <person name="Zatz M."/>
            <person name="Meidanis J."/>
            <person name="Setubal J.C."/>
        </authorList>
    </citation>
    <scope>NUCLEOTIDE SEQUENCE [LARGE SCALE GENOMIC DNA]</scope>
    <source>
        <strain>9a5c</strain>
    </source>
</reference>
<dbReference type="EMBL" id="AE003849">
    <property type="protein sequence ID" value="AAF84615.1"/>
    <property type="molecule type" value="Genomic_DNA"/>
</dbReference>
<dbReference type="PIR" id="C82635">
    <property type="entry name" value="C82635"/>
</dbReference>
<dbReference type="SMR" id="Q9PCH2"/>
<dbReference type="STRING" id="160492.XF_1808"/>
<dbReference type="KEGG" id="xfa:XF_1808"/>
<dbReference type="eggNOG" id="COG0718">
    <property type="taxonomic scope" value="Bacteria"/>
</dbReference>
<dbReference type="HOGENOM" id="CLU_140930_0_0_6"/>
<dbReference type="Proteomes" id="UP000000812">
    <property type="component" value="Chromosome"/>
</dbReference>
<dbReference type="GO" id="GO:0043590">
    <property type="term" value="C:bacterial nucleoid"/>
    <property type="evidence" value="ECO:0007669"/>
    <property type="project" value="UniProtKB-UniRule"/>
</dbReference>
<dbReference type="GO" id="GO:0005829">
    <property type="term" value="C:cytosol"/>
    <property type="evidence" value="ECO:0007669"/>
    <property type="project" value="TreeGrafter"/>
</dbReference>
<dbReference type="GO" id="GO:0003677">
    <property type="term" value="F:DNA binding"/>
    <property type="evidence" value="ECO:0007669"/>
    <property type="project" value="UniProtKB-UniRule"/>
</dbReference>
<dbReference type="FunFam" id="3.30.1310.10:FF:000001">
    <property type="entry name" value="Nucleoid-associated protein YbaB"/>
    <property type="match status" value="1"/>
</dbReference>
<dbReference type="Gene3D" id="3.30.1310.10">
    <property type="entry name" value="Nucleoid-associated protein YbaB-like domain"/>
    <property type="match status" value="1"/>
</dbReference>
<dbReference type="HAMAP" id="MF_00274">
    <property type="entry name" value="DNA_YbaB_EbfC"/>
    <property type="match status" value="1"/>
</dbReference>
<dbReference type="InterPro" id="IPR036894">
    <property type="entry name" value="YbaB-like_sf"/>
</dbReference>
<dbReference type="InterPro" id="IPR004401">
    <property type="entry name" value="YbaB/EbfC"/>
</dbReference>
<dbReference type="NCBIfam" id="TIGR00103">
    <property type="entry name" value="DNA_YbaB_EbfC"/>
    <property type="match status" value="1"/>
</dbReference>
<dbReference type="PANTHER" id="PTHR33449">
    <property type="entry name" value="NUCLEOID-ASSOCIATED PROTEIN YBAB"/>
    <property type="match status" value="1"/>
</dbReference>
<dbReference type="PANTHER" id="PTHR33449:SF1">
    <property type="entry name" value="NUCLEOID-ASSOCIATED PROTEIN YBAB"/>
    <property type="match status" value="1"/>
</dbReference>
<dbReference type="Pfam" id="PF02575">
    <property type="entry name" value="YbaB_DNA_bd"/>
    <property type="match status" value="1"/>
</dbReference>
<dbReference type="PIRSF" id="PIRSF004555">
    <property type="entry name" value="UCP004555"/>
    <property type="match status" value="1"/>
</dbReference>
<dbReference type="SUPFAM" id="SSF82607">
    <property type="entry name" value="YbaB-like"/>
    <property type="match status" value="1"/>
</dbReference>
<keyword id="KW-0963">Cytoplasm</keyword>
<keyword id="KW-0238">DNA-binding</keyword>
<proteinExistence type="inferred from homology"/>
<organism>
    <name type="scientific">Xylella fastidiosa (strain 9a5c)</name>
    <dbReference type="NCBI Taxonomy" id="160492"/>
    <lineage>
        <taxon>Bacteria</taxon>
        <taxon>Pseudomonadati</taxon>
        <taxon>Pseudomonadota</taxon>
        <taxon>Gammaproteobacteria</taxon>
        <taxon>Lysobacterales</taxon>
        <taxon>Lysobacteraceae</taxon>
        <taxon>Xylella</taxon>
    </lineage>
</organism>
<evidence type="ECO:0000255" key="1">
    <source>
        <dbReference type="HAMAP-Rule" id="MF_00274"/>
    </source>
</evidence>
<gene>
    <name type="ordered locus">XF_1808</name>
</gene>
<sequence>MMRGNIAQLMQQAQKMQENLQRAQEELAKLEVTGSAGGGMVSVILSGTKECRKVRIDPSILNDQEMIEDLIAAAFNDASNKVDTESKERMGSATLGMSLPPGFKLPF</sequence>
<protein>
    <recommendedName>
        <fullName evidence="1">Nucleoid-associated protein XF_1808</fullName>
    </recommendedName>
</protein>
<accession>Q9PCH2</accession>
<feature type="chain" id="PRO_0000170469" description="Nucleoid-associated protein XF_1808">
    <location>
        <begin position="1"/>
        <end position="107"/>
    </location>
</feature>
<comment type="function">
    <text evidence="1">Binds to DNA and alters its conformation. May be involved in regulation of gene expression, nucleoid organization and DNA protection.</text>
</comment>
<comment type="subunit">
    <text evidence="1">Homodimer.</text>
</comment>
<comment type="subcellular location">
    <subcellularLocation>
        <location evidence="1">Cytoplasm</location>
        <location evidence="1">Nucleoid</location>
    </subcellularLocation>
</comment>
<comment type="similarity">
    <text evidence="1">Belongs to the YbaB/EbfC family.</text>
</comment>
<name>Y1808_XYLFA</name>